<feature type="chain" id="PRO_1000088560" description="Isoleucine--tRNA ligase">
    <location>
        <begin position="1"/>
        <end position="930"/>
    </location>
</feature>
<feature type="short sequence motif" description="'HIGH' region">
    <location>
        <begin position="57"/>
        <end position="67"/>
    </location>
</feature>
<feature type="short sequence motif" description="'KMSKS' region">
    <location>
        <begin position="595"/>
        <end position="599"/>
    </location>
</feature>
<feature type="binding site" evidence="1">
    <location>
        <position position="554"/>
    </location>
    <ligand>
        <name>L-isoleucyl-5'-AMP</name>
        <dbReference type="ChEBI" id="CHEBI:178002"/>
    </ligand>
</feature>
<feature type="binding site" evidence="1">
    <location>
        <position position="598"/>
    </location>
    <ligand>
        <name>ATP</name>
        <dbReference type="ChEBI" id="CHEBI:30616"/>
    </ligand>
</feature>
<feature type="binding site" evidence="1">
    <location>
        <position position="888"/>
    </location>
    <ligand>
        <name>Zn(2+)</name>
        <dbReference type="ChEBI" id="CHEBI:29105"/>
    </ligand>
</feature>
<feature type="binding site" evidence="1">
    <location>
        <position position="891"/>
    </location>
    <ligand>
        <name>Zn(2+)</name>
        <dbReference type="ChEBI" id="CHEBI:29105"/>
    </ligand>
</feature>
<feature type="binding site" evidence="1">
    <location>
        <position position="908"/>
    </location>
    <ligand>
        <name>Zn(2+)</name>
        <dbReference type="ChEBI" id="CHEBI:29105"/>
    </ligand>
</feature>
<feature type="binding site" evidence="1">
    <location>
        <position position="911"/>
    </location>
    <ligand>
        <name>Zn(2+)</name>
        <dbReference type="ChEBI" id="CHEBI:29105"/>
    </ligand>
</feature>
<gene>
    <name evidence="1" type="primary">ileS</name>
    <name type="ordered locus">SGO_0681</name>
</gene>
<accession>A8AW24</accession>
<proteinExistence type="inferred from homology"/>
<dbReference type="EC" id="6.1.1.5" evidence="1"/>
<dbReference type="EMBL" id="CP000725">
    <property type="protein sequence ID" value="ABV09656.1"/>
    <property type="molecule type" value="Genomic_DNA"/>
</dbReference>
<dbReference type="RefSeq" id="WP_012000155.1">
    <property type="nucleotide sequence ID" value="NC_009785.1"/>
</dbReference>
<dbReference type="SMR" id="A8AW24"/>
<dbReference type="STRING" id="467705.SGO_0681"/>
<dbReference type="KEGG" id="sgo:SGO_0681"/>
<dbReference type="eggNOG" id="COG0060">
    <property type="taxonomic scope" value="Bacteria"/>
</dbReference>
<dbReference type="HOGENOM" id="CLU_001493_7_1_9"/>
<dbReference type="Proteomes" id="UP000001131">
    <property type="component" value="Chromosome"/>
</dbReference>
<dbReference type="GO" id="GO:0005829">
    <property type="term" value="C:cytosol"/>
    <property type="evidence" value="ECO:0007669"/>
    <property type="project" value="TreeGrafter"/>
</dbReference>
<dbReference type="GO" id="GO:0002161">
    <property type="term" value="F:aminoacyl-tRNA deacylase activity"/>
    <property type="evidence" value="ECO:0007669"/>
    <property type="project" value="InterPro"/>
</dbReference>
<dbReference type="GO" id="GO:0005524">
    <property type="term" value="F:ATP binding"/>
    <property type="evidence" value="ECO:0007669"/>
    <property type="project" value="UniProtKB-UniRule"/>
</dbReference>
<dbReference type="GO" id="GO:0004822">
    <property type="term" value="F:isoleucine-tRNA ligase activity"/>
    <property type="evidence" value="ECO:0007669"/>
    <property type="project" value="UniProtKB-UniRule"/>
</dbReference>
<dbReference type="GO" id="GO:0000049">
    <property type="term" value="F:tRNA binding"/>
    <property type="evidence" value="ECO:0007669"/>
    <property type="project" value="InterPro"/>
</dbReference>
<dbReference type="GO" id="GO:0008270">
    <property type="term" value="F:zinc ion binding"/>
    <property type="evidence" value="ECO:0007669"/>
    <property type="project" value="UniProtKB-UniRule"/>
</dbReference>
<dbReference type="GO" id="GO:0006428">
    <property type="term" value="P:isoleucyl-tRNA aminoacylation"/>
    <property type="evidence" value="ECO:0007669"/>
    <property type="project" value="UniProtKB-UniRule"/>
</dbReference>
<dbReference type="CDD" id="cd07960">
    <property type="entry name" value="Anticodon_Ia_Ile_BEm"/>
    <property type="match status" value="1"/>
</dbReference>
<dbReference type="CDD" id="cd00818">
    <property type="entry name" value="IleRS_core"/>
    <property type="match status" value="1"/>
</dbReference>
<dbReference type="FunFam" id="1.10.10.830:FF:000001">
    <property type="entry name" value="Isoleucine--tRNA ligase"/>
    <property type="match status" value="1"/>
</dbReference>
<dbReference type="FunFam" id="1.10.730.20:FF:000001">
    <property type="entry name" value="Isoleucine--tRNA ligase"/>
    <property type="match status" value="1"/>
</dbReference>
<dbReference type="FunFam" id="3.40.50.620:FF:000092">
    <property type="entry name" value="Isoleucine--tRNA ligase"/>
    <property type="match status" value="1"/>
</dbReference>
<dbReference type="FunFam" id="3.90.740.10:FF:000006">
    <property type="entry name" value="Isoleucine--tRNA ligase"/>
    <property type="match status" value="1"/>
</dbReference>
<dbReference type="Gene3D" id="1.10.730.20">
    <property type="match status" value="1"/>
</dbReference>
<dbReference type="Gene3D" id="3.40.50.620">
    <property type="entry name" value="HUPs"/>
    <property type="match status" value="2"/>
</dbReference>
<dbReference type="Gene3D" id="1.10.10.830">
    <property type="entry name" value="Ile-tRNA synthetase CP2 domain-like"/>
    <property type="match status" value="1"/>
</dbReference>
<dbReference type="Gene3D" id="3.90.740.10">
    <property type="entry name" value="Valyl/Leucyl/Isoleucyl-tRNA synthetase, editing domain"/>
    <property type="match status" value="1"/>
</dbReference>
<dbReference type="HAMAP" id="MF_02002">
    <property type="entry name" value="Ile_tRNA_synth_type1"/>
    <property type="match status" value="1"/>
</dbReference>
<dbReference type="InterPro" id="IPR001412">
    <property type="entry name" value="aa-tRNA-synth_I_CS"/>
</dbReference>
<dbReference type="InterPro" id="IPR002300">
    <property type="entry name" value="aa-tRNA-synth_Ia"/>
</dbReference>
<dbReference type="InterPro" id="IPR033708">
    <property type="entry name" value="Anticodon_Ile_BEm"/>
</dbReference>
<dbReference type="InterPro" id="IPR002301">
    <property type="entry name" value="Ile-tRNA-ligase"/>
</dbReference>
<dbReference type="InterPro" id="IPR023585">
    <property type="entry name" value="Ile-tRNA-ligase_type1"/>
</dbReference>
<dbReference type="InterPro" id="IPR050081">
    <property type="entry name" value="Ile-tRNA_ligase"/>
</dbReference>
<dbReference type="InterPro" id="IPR013155">
    <property type="entry name" value="M/V/L/I-tRNA-synth_anticd-bd"/>
</dbReference>
<dbReference type="InterPro" id="IPR014729">
    <property type="entry name" value="Rossmann-like_a/b/a_fold"/>
</dbReference>
<dbReference type="InterPro" id="IPR009080">
    <property type="entry name" value="tRNAsynth_Ia_anticodon-bd"/>
</dbReference>
<dbReference type="InterPro" id="IPR009008">
    <property type="entry name" value="Val/Leu/Ile-tRNA-synth_edit"/>
</dbReference>
<dbReference type="InterPro" id="IPR010663">
    <property type="entry name" value="Znf_FPG/IleRS"/>
</dbReference>
<dbReference type="NCBIfam" id="TIGR00392">
    <property type="entry name" value="ileS"/>
    <property type="match status" value="1"/>
</dbReference>
<dbReference type="PANTHER" id="PTHR42765:SF1">
    <property type="entry name" value="ISOLEUCINE--TRNA LIGASE, MITOCHONDRIAL"/>
    <property type="match status" value="1"/>
</dbReference>
<dbReference type="PANTHER" id="PTHR42765">
    <property type="entry name" value="SOLEUCYL-TRNA SYNTHETASE"/>
    <property type="match status" value="1"/>
</dbReference>
<dbReference type="Pfam" id="PF08264">
    <property type="entry name" value="Anticodon_1"/>
    <property type="match status" value="1"/>
</dbReference>
<dbReference type="Pfam" id="PF00133">
    <property type="entry name" value="tRNA-synt_1"/>
    <property type="match status" value="1"/>
</dbReference>
<dbReference type="Pfam" id="PF06827">
    <property type="entry name" value="zf-FPG_IleRS"/>
    <property type="match status" value="1"/>
</dbReference>
<dbReference type="PRINTS" id="PR00984">
    <property type="entry name" value="TRNASYNTHILE"/>
</dbReference>
<dbReference type="SUPFAM" id="SSF47323">
    <property type="entry name" value="Anticodon-binding domain of a subclass of class I aminoacyl-tRNA synthetases"/>
    <property type="match status" value="1"/>
</dbReference>
<dbReference type="SUPFAM" id="SSF52374">
    <property type="entry name" value="Nucleotidylyl transferase"/>
    <property type="match status" value="1"/>
</dbReference>
<dbReference type="SUPFAM" id="SSF50677">
    <property type="entry name" value="ValRS/IleRS/LeuRS editing domain"/>
    <property type="match status" value="1"/>
</dbReference>
<dbReference type="PROSITE" id="PS00178">
    <property type="entry name" value="AA_TRNA_LIGASE_I"/>
    <property type="match status" value="1"/>
</dbReference>
<reference key="1">
    <citation type="journal article" date="2007" name="J. Bacteriol.">
        <title>Genome-wide transcriptional changes in Streptococcus gordonii in response to competence signaling peptide.</title>
        <authorList>
            <person name="Vickerman M.M."/>
            <person name="Iobst S."/>
            <person name="Jesionowski A.M."/>
            <person name="Gill S.R."/>
        </authorList>
    </citation>
    <scope>NUCLEOTIDE SEQUENCE [LARGE SCALE GENOMIC DNA]</scope>
    <source>
        <strain>Challis / ATCC 35105 / BCRC 15272 / CH1 / DL1 / V288</strain>
    </source>
</reference>
<protein>
    <recommendedName>
        <fullName evidence="1">Isoleucine--tRNA ligase</fullName>
        <ecNumber evidence="1">6.1.1.5</ecNumber>
    </recommendedName>
    <alternativeName>
        <fullName evidence="1">Isoleucyl-tRNA synthetase</fullName>
        <shortName evidence="1">IleRS</shortName>
    </alternativeName>
</protein>
<keyword id="KW-0030">Aminoacyl-tRNA synthetase</keyword>
<keyword id="KW-0067">ATP-binding</keyword>
<keyword id="KW-0963">Cytoplasm</keyword>
<keyword id="KW-0436">Ligase</keyword>
<keyword id="KW-0479">Metal-binding</keyword>
<keyword id="KW-0547">Nucleotide-binding</keyword>
<keyword id="KW-0648">Protein biosynthesis</keyword>
<keyword id="KW-1185">Reference proteome</keyword>
<keyword id="KW-0862">Zinc</keyword>
<sequence length="930" mass="105189">MKLKETLNLGKTDFPMRAGLPTKEPVWQKEWEEAKLYQRRQELNQGKPHFTLHDGPPYANGNIHVGHAMNKISKDIIVRSKSMSGFYAPYIPGWDTHGLPIEQVLAKQGVKRKEMDLVEYLKLCREYALSQVDKQREDFKRLGVSGDWENPYVTLTPDYEAAQIRVFGEMAKKGYIYRGAKPVYWSWSSESALAEAEIEYHDLLSTSLYYANRVKDGKGVLDTDTYIVVWTTTPFTITASRGLTVGADIDYVLVQPAGESRKFVVASELLNSLSEKFGWADVQVLATYRGQELNHIVTVHPWDTAVDELVILGDHVTTDSGTGIVHTAPGFGEDDYNVGVANGLEVAVTVNERGIMMENAGPEFAGQFYDKVVPTVIEKLGDLLLAQEEISHSYPFDWRTKKPIIWRAVPQWFASVSKFRQEILDEIEKVKFHSEWGKVRLYNMIRDRGDWVISRQRAWGVPLPIFYAEDGTPIMTVETIEHVAQLFEEHGSIIWWERDAKDLLPEGFTHPGSPNGEFKKETDIMDVWFDSGSSWNGVVVNRPELKYPADLYLEGSDQYRGWFNSSLITSVANHGVAPYKQILSQGFALDGKGEKMSKSLGNTIAPSDVEKQFGAEILRLWVTSVDSSNDVRISMDILSQVSETYRKIRNTLRFLIANTSDFNPAEDTVAYEELRSVDKYMTVRFNQLVKTIRDAYADFEFLTIYKALVNFINVDLSAFYLDFAKDVVYIEGAKSLERRQMQTVFYDILVKITKLLTPILPHTAEEIWSYLEFEAEDFVQLSELPEAETFANQEEILNTWAAFMDFRGQAQKALEEARNAKVIGKSLEAHLTIYPNEVVKTLLGAVDSNVAQLLIVSELTIAEGGAPEGAVSFEDVAFTVERAAGEVCDRCRRIDPTTAERNYHAVICDHCASIVEENFADAVAEGFETK</sequence>
<evidence type="ECO:0000255" key="1">
    <source>
        <dbReference type="HAMAP-Rule" id="MF_02002"/>
    </source>
</evidence>
<comment type="function">
    <text evidence="1">Catalyzes the attachment of isoleucine to tRNA(Ile). As IleRS can inadvertently accommodate and process structurally similar amino acids such as valine, to avoid such errors it has two additional distinct tRNA(Ile)-dependent editing activities. One activity is designated as 'pretransfer' editing and involves the hydrolysis of activated Val-AMP. The other activity is designated 'posttransfer' editing and involves deacylation of mischarged Val-tRNA(Ile).</text>
</comment>
<comment type="catalytic activity">
    <reaction evidence="1">
        <text>tRNA(Ile) + L-isoleucine + ATP = L-isoleucyl-tRNA(Ile) + AMP + diphosphate</text>
        <dbReference type="Rhea" id="RHEA:11060"/>
        <dbReference type="Rhea" id="RHEA-COMP:9666"/>
        <dbReference type="Rhea" id="RHEA-COMP:9695"/>
        <dbReference type="ChEBI" id="CHEBI:30616"/>
        <dbReference type="ChEBI" id="CHEBI:33019"/>
        <dbReference type="ChEBI" id="CHEBI:58045"/>
        <dbReference type="ChEBI" id="CHEBI:78442"/>
        <dbReference type="ChEBI" id="CHEBI:78528"/>
        <dbReference type="ChEBI" id="CHEBI:456215"/>
        <dbReference type="EC" id="6.1.1.5"/>
    </reaction>
</comment>
<comment type="cofactor">
    <cofactor evidence="1">
        <name>Zn(2+)</name>
        <dbReference type="ChEBI" id="CHEBI:29105"/>
    </cofactor>
    <text evidence="1">Binds 1 zinc ion per subunit.</text>
</comment>
<comment type="subunit">
    <text evidence="1">Monomer.</text>
</comment>
<comment type="subcellular location">
    <subcellularLocation>
        <location evidence="1">Cytoplasm</location>
    </subcellularLocation>
</comment>
<comment type="domain">
    <text evidence="1">IleRS has two distinct active sites: one for aminoacylation and one for editing. The misactivated valine is translocated from the active site to the editing site, which sterically excludes the correctly activated isoleucine. The single editing site contains two valyl binding pockets, one specific for each substrate (Val-AMP or Val-tRNA(Ile)).</text>
</comment>
<comment type="similarity">
    <text evidence="1">Belongs to the class-I aminoacyl-tRNA synthetase family. IleS type 1 subfamily.</text>
</comment>
<name>SYI_STRGC</name>
<organism>
    <name type="scientific">Streptococcus gordonii (strain Challis / ATCC 35105 / BCRC 15272 / CH1 / DL1 / V288)</name>
    <dbReference type="NCBI Taxonomy" id="467705"/>
    <lineage>
        <taxon>Bacteria</taxon>
        <taxon>Bacillati</taxon>
        <taxon>Bacillota</taxon>
        <taxon>Bacilli</taxon>
        <taxon>Lactobacillales</taxon>
        <taxon>Streptococcaceae</taxon>
        <taxon>Streptococcus</taxon>
    </lineage>
</organism>